<name>TIG_ECO81</name>
<gene>
    <name evidence="1" type="primary">tig</name>
    <name type="ordered locus">ECED1_0460</name>
</gene>
<dbReference type="EC" id="5.2.1.8" evidence="1"/>
<dbReference type="EMBL" id="CU928162">
    <property type="protein sequence ID" value="CAR06670.1"/>
    <property type="molecule type" value="Genomic_DNA"/>
</dbReference>
<dbReference type="RefSeq" id="WP_001198386.1">
    <property type="nucleotide sequence ID" value="NC_011745.1"/>
</dbReference>
<dbReference type="SMR" id="B7MQF2"/>
<dbReference type="GeneID" id="75202861"/>
<dbReference type="KEGG" id="ecq:ECED1_0460"/>
<dbReference type="HOGENOM" id="CLU_033058_2_0_6"/>
<dbReference type="Proteomes" id="UP000000748">
    <property type="component" value="Chromosome"/>
</dbReference>
<dbReference type="GO" id="GO:0005737">
    <property type="term" value="C:cytoplasm"/>
    <property type="evidence" value="ECO:0007669"/>
    <property type="project" value="UniProtKB-SubCell"/>
</dbReference>
<dbReference type="GO" id="GO:0003755">
    <property type="term" value="F:peptidyl-prolyl cis-trans isomerase activity"/>
    <property type="evidence" value="ECO:0007669"/>
    <property type="project" value="UniProtKB-UniRule"/>
</dbReference>
<dbReference type="GO" id="GO:0044183">
    <property type="term" value="F:protein folding chaperone"/>
    <property type="evidence" value="ECO:0007669"/>
    <property type="project" value="TreeGrafter"/>
</dbReference>
<dbReference type="GO" id="GO:0043022">
    <property type="term" value="F:ribosome binding"/>
    <property type="evidence" value="ECO:0007669"/>
    <property type="project" value="TreeGrafter"/>
</dbReference>
<dbReference type="GO" id="GO:0051083">
    <property type="term" value="P:'de novo' cotranslational protein folding"/>
    <property type="evidence" value="ECO:0007669"/>
    <property type="project" value="TreeGrafter"/>
</dbReference>
<dbReference type="GO" id="GO:0051301">
    <property type="term" value="P:cell division"/>
    <property type="evidence" value="ECO:0007669"/>
    <property type="project" value="UniProtKB-KW"/>
</dbReference>
<dbReference type="GO" id="GO:0061077">
    <property type="term" value="P:chaperone-mediated protein folding"/>
    <property type="evidence" value="ECO:0007669"/>
    <property type="project" value="TreeGrafter"/>
</dbReference>
<dbReference type="GO" id="GO:0015031">
    <property type="term" value="P:protein transport"/>
    <property type="evidence" value="ECO:0007669"/>
    <property type="project" value="UniProtKB-UniRule"/>
</dbReference>
<dbReference type="GO" id="GO:0043335">
    <property type="term" value="P:protein unfolding"/>
    <property type="evidence" value="ECO:0007669"/>
    <property type="project" value="TreeGrafter"/>
</dbReference>
<dbReference type="FunFam" id="1.10.3120.10:FF:000001">
    <property type="entry name" value="Trigger factor"/>
    <property type="match status" value="1"/>
</dbReference>
<dbReference type="FunFam" id="3.10.50.40:FF:000001">
    <property type="entry name" value="Trigger factor"/>
    <property type="match status" value="1"/>
</dbReference>
<dbReference type="FunFam" id="3.30.70.1050:FF:000001">
    <property type="entry name" value="Trigger factor"/>
    <property type="match status" value="1"/>
</dbReference>
<dbReference type="Gene3D" id="3.10.50.40">
    <property type="match status" value="1"/>
</dbReference>
<dbReference type="Gene3D" id="3.30.70.1050">
    <property type="entry name" value="Trigger factor ribosome-binding domain"/>
    <property type="match status" value="1"/>
</dbReference>
<dbReference type="Gene3D" id="1.10.3120.10">
    <property type="entry name" value="Trigger factor, C-terminal domain"/>
    <property type="match status" value="1"/>
</dbReference>
<dbReference type="HAMAP" id="MF_00303">
    <property type="entry name" value="Trigger_factor_Tig"/>
    <property type="match status" value="1"/>
</dbReference>
<dbReference type="InterPro" id="IPR046357">
    <property type="entry name" value="PPIase_dom_sf"/>
</dbReference>
<dbReference type="InterPro" id="IPR001179">
    <property type="entry name" value="PPIase_FKBP_dom"/>
</dbReference>
<dbReference type="InterPro" id="IPR005215">
    <property type="entry name" value="Trig_fac"/>
</dbReference>
<dbReference type="InterPro" id="IPR008880">
    <property type="entry name" value="Trigger_fac_C"/>
</dbReference>
<dbReference type="InterPro" id="IPR037041">
    <property type="entry name" value="Trigger_fac_C_sf"/>
</dbReference>
<dbReference type="InterPro" id="IPR008881">
    <property type="entry name" value="Trigger_fac_ribosome-bd_bac"/>
</dbReference>
<dbReference type="InterPro" id="IPR036611">
    <property type="entry name" value="Trigger_fac_ribosome-bd_sf"/>
</dbReference>
<dbReference type="InterPro" id="IPR027304">
    <property type="entry name" value="Trigger_fact/SurA_dom_sf"/>
</dbReference>
<dbReference type="NCBIfam" id="TIGR00115">
    <property type="entry name" value="tig"/>
    <property type="match status" value="1"/>
</dbReference>
<dbReference type="PANTHER" id="PTHR30560">
    <property type="entry name" value="TRIGGER FACTOR CHAPERONE AND PEPTIDYL-PROLYL CIS/TRANS ISOMERASE"/>
    <property type="match status" value="1"/>
</dbReference>
<dbReference type="PANTHER" id="PTHR30560:SF3">
    <property type="entry name" value="TRIGGER FACTOR-LIKE PROTEIN TIG, CHLOROPLASTIC"/>
    <property type="match status" value="1"/>
</dbReference>
<dbReference type="Pfam" id="PF00254">
    <property type="entry name" value="FKBP_C"/>
    <property type="match status" value="1"/>
</dbReference>
<dbReference type="Pfam" id="PF05698">
    <property type="entry name" value="Trigger_C"/>
    <property type="match status" value="1"/>
</dbReference>
<dbReference type="Pfam" id="PF05697">
    <property type="entry name" value="Trigger_N"/>
    <property type="match status" value="1"/>
</dbReference>
<dbReference type="PIRSF" id="PIRSF003095">
    <property type="entry name" value="Trigger_factor"/>
    <property type="match status" value="1"/>
</dbReference>
<dbReference type="SUPFAM" id="SSF54534">
    <property type="entry name" value="FKBP-like"/>
    <property type="match status" value="1"/>
</dbReference>
<dbReference type="SUPFAM" id="SSF109998">
    <property type="entry name" value="Triger factor/SurA peptide-binding domain-like"/>
    <property type="match status" value="1"/>
</dbReference>
<dbReference type="SUPFAM" id="SSF102735">
    <property type="entry name" value="Trigger factor ribosome-binding domain"/>
    <property type="match status" value="1"/>
</dbReference>
<dbReference type="PROSITE" id="PS50059">
    <property type="entry name" value="FKBP_PPIASE"/>
    <property type="match status" value="1"/>
</dbReference>
<keyword id="KW-0131">Cell cycle</keyword>
<keyword id="KW-0132">Cell division</keyword>
<keyword id="KW-0143">Chaperone</keyword>
<keyword id="KW-0963">Cytoplasm</keyword>
<keyword id="KW-0413">Isomerase</keyword>
<keyword id="KW-0697">Rotamase</keyword>
<organism>
    <name type="scientific">Escherichia coli O81 (strain ED1a)</name>
    <dbReference type="NCBI Taxonomy" id="585397"/>
    <lineage>
        <taxon>Bacteria</taxon>
        <taxon>Pseudomonadati</taxon>
        <taxon>Pseudomonadota</taxon>
        <taxon>Gammaproteobacteria</taxon>
        <taxon>Enterobacterales</taxon>
        <taxon>Enterobacteriaceae</taxon>
        <taxon>Escherichia</taxon>
    </lineage>
</organism>
<proteinExistence type="inferred from homology"/>
<evidence type="ECO:0000255" key="1">
    <source>
        <dbReference type="HAMAP-Rule" id="MF_00303"/>
    </source>
</evidence>
<reference key="1">
    <citation type="journal article" date="2009" name="PLoS Genet.">
        <title>Organised genome dynamics in the Escherichia coli species results in highly diverse adaptive paths.</title>
        <authorList>
            <person name="Touchon M."/>
            <person name="Hoede C."/>
            <person name="Tenaillon O."/>
            <person name="Barbe V."/>
            <person name="Baeriswyl S."/>
            <person name="Bidet P."/>
            <person name="Bingen E."/>
            <person name="Bonacorsi S."/>
            <person name="Bouchier C."/>
            <person name="Bouvet O."/>
            <person name="Calteau A."/>
            <person name="Chiapello H."/>
            <person name="Clermont O."/>
            <person name="Cruveiller S."/>
            <person name="Danchin A."/>
            <person name="Diard M."/>
            <person name="Dossat C."/>
            <person name="Karoui M.E."/>
            <person name="Frapy E."/>
            <person name="Garry L."/>
            <person name="Ghigo J.M."/>
            <person name="Gilles A.M."/>
            <person name="Johnson J."/>
            <person name="Le Bouguenec C."/>
            <person name="Lescat M."/>
            <person name="Mangenot S."/>
            <person name="Martinez-Jehanne V."/>
            <person name="Matic I."/>
            <person name="Nassif X."/>
            <person name="Oztas S."/>
            <person name="Petit M.A."/>
            <person name="Pichon C."/>
            <person name="Rouy Z."/>
            <person name="Ruf C.S."/>
            <person name="Schneider D."/>
            <person name="Tourret J."/>
            <person name="Vacherie B."/>
            <person name="Vallenet D."/>
            <person name="Medigue C."/>
            <person name="Rocha E.P.C."/>
            <person name="Denamur E."/>
        </authorList>
    </citation>
    <scope>NUCLEOTIDE SEQUENCE [LARGE SCALE GENOMIC DNA]</scope>
    <source>
        <strain>ED1a</strain>
    </source>
</reference>
<feature type="chain" id="PRO_1000198158" description="Trigger factor">
    <location>
        <begin position="1"/>
        <end position="432"/>
    </location>
</feature>
<feature type="domain" description="PPIase FKBP-type" evidence="1">
    <location>
        <begin position="161"/>
        <end position="246"/>
    </location>
</feature>
<protein>
    <recommendedName>
        <fullName evidence="1">Trigger factor</fullName>
        <shortName evidence="1">TF</shortName>
        <ecNumber evidence="1">5.2.1.8</ecNumber>
    </recommendedName>
    <alternativeName>
        <fullName evidence="1">PPIase</fullName>
    </alternativeName>
</protein>
<comment type="function">
    <text evidence="1">Involved in protein export. Acts as a chaperone by maintaining the newly synthesized protein in an open conformation. Functions as a peptidyl-prolyl cis-trans isomerase.</text>
</comment>
<comment type="catalytic activity">
    <reaction evidence="1">
        <text>[protein]-peptidylproline (omega=180) = [protein]-peptidylproline (omega=0)</text>
        <dbReference type="Rhea" id="RHEA:16237"/>
        <dbReference type="Rhea" id="RHEA-COMP:10747"/>
        <dbReference type="Rhea" id="RHEA-COMP:10748"/>
        <dbReference type="ChEBI" id="CHEBI:83833"/>
        <dbReference type="ChEBI" id="CHEBI:83834"/>
        <dbReference type="EC" id="5.2.1.8"/>
    </reaction>
</comment>
<comment type="subunit">
    <text evidence="1">Homodimer and monomer. In vivo most of the ribosomes are in complex with monomeric TF. Uncomplexed TF, however, is in a monomer-dimer equilibrium with approximately two thirds of TF existing in a dimeric state.</text>
</comment>
<comment type="subcellular location">
    <subcellularLocation>
        <location>Cytoplasm</location>
    </subcellularLocation>
    <text evidence="1">About half TF is bound to the ribosome near the polypeptide exit tunnel while the other half is free in the cytoplasm.</text>
</comment>
<comment type="domain">
    <text evidence="1">Consists of 3 domains; the N-terminus binds the ribosome, the middle domain has PPIase activity, while the C-terminus has intrinsic chaperone activity on its own.</text>
</comment>
<comment type="similarity">
    <text evidence="1">Belongs to the FKBP-type PPIase family. Tig subfamily.</text>
</comment>
<accession>B7MQF2</accession>
<sequence>MQVSVETTQGLGRRVTITIAADSIETAVKSELVNVAKKVRIDGFRKGKVPMNIVAQRYGASVRQDVLGDLMSRNFIDAIIKEKINPAGAPTYVPGEYKLGEDFTYSVEFEVYPEVELQGLEAIEVEKPIVEVTDADVDGMLDTLRKQQATWKEKDGAVEAEDRVTIDFTGSVDGEEFEGGKASDFVLAMGQGRMIPGFEDGIKGHKAGEEFTIDVTFPEEYHAENLKGKAAKFAINLKKVEERELPELTAEFIKRFGVEDGSVEGLRAEVRKNMERELKSAIRNRVKSQAIEGLVKANDIDVPAALIDSEIDVLRRQAAQRFGGNEKQALELPRELFEEQAKRRVVVGLLLGEVIRTNELKADEERVKGLIEEMASAYEDPKEVIEFYSKNKELMDNMRNVALEEQAVEAVLAKAKVTEKETTFNELMNQQA</sequence>